<evidence type="ECO:0000250" key="1">
    <source>
        <dbReference type="UniProtKB" id="A0A0D4WTV1"/>
    </source>
</evidence>
<evidence type="ECO:0000250" key="2">
    <source>
        <dbReference type="UniProtKB" id="A0A0D4WV12"/>
    </source>
</evidence>
<evidence type="ECO:0000250" key="3">
    <source>
        <dbReference type="UniProtKB" id="P0CE80"/>
    </source>
</evidence>
<evidence type="ECO:0000250" key="4">
    <source>
        <dbReference type="UniProtKB" id="Q4ZFU2"/>
    </source>
</evidence>
<evidence type="ECO:0000250" key="5">
    <source>
        <dbReference type="UniProtKB" id="Q8I914"/>
    </source>
</evidence>
<evidence type="ECO:0000303" key="6">
    <source>
    </source>
</evidence>
<evidence type="ECO:0000305" key="7"/>
<evidence type="ECO:0000305" key="8">
    <source>
    </source>
</evidence>
<protein>
    <recommendedName>
        <fullName evidence="6">Dermonecrotic toxin SdSicTox-betaIIB1bv</fullName>
        <ecNumber evidence="4">4.6.1.-</ecNumber>
    </recommendedName>
    <alternativeName>
        <fullName>Phospholipase D</fullName>
        <shortName>PLD</shortName>
    </alternativeName>
    <alternativeName>
        <fullName>Sphingomyelin phosphodiesterase D</fullName>
        <shortName>SMD</shortName>
        <shortName>SMase D</shortName>
        <shortName>Sphingomyelinase D</shortName>
    </alternativeName>
</protein>
<keyword id="KW-0204">Cytolysis</keyword>
<keyword id="KW-1061">Dermonecrotic toxin</keyword>
<keyword id="KW-1015">Disulfide bond</keyword>
<keyword id="KW-0354">Hemolysis</keyword>
<keyword id="KW-0442">Lipid degradation</keyword>
<keyword id="KW-0443">Lipid metabolism</keyword>
<keyword id="KW-0456">Lyase</keyword>
<keyword id="KW-0460">Magnesium</keyword>
<keyword id="KW-0479">Metal-binding</keyword>
<keyword id="KW-0964">Secreted</keyword>
<keyword id="KW-0800">Toxin</keyword>
<reference key="1">
    <citation type="journal article" date="2009" name="Mol. Biol. Evol.">
        <title>Molecular evolution, functional variation, and proposed nomenclature of the gene family that includes sphingomyelinase D in sicariid spider venoms.</title>
        <authorList>
            <person name="Binford G.J."/>
            <person name="Bodner M.R."/>
            <person name="Cordes M.H."/>
            <person name="Baldwin K.L."/>
            <person name="Rynerson M.R."/>
            <person name="Burns S.N."/>
            <person name="Zobel-Thropp P.A."/>
        </authorList>
    </citation>
    <scope>NUCLEOTIDE SEQUENCE [MRNA]</scope>
    <scope>NOMENCLATURE</scope>
    <source>
        <tissue>Venom gland</tissue>
    </source>
</reference>
<sequence>WIMGHMVNAIEQVGEFLNLGADAIEFDFDFDKDGIAQVTHHGIPCDCGRKCTKKAIFTEYLDNIRQVTTPDDPKFREQLVLLALDLKLQRISSAKAYRAGEDVAKKLLDHYWQRGNSRARAYILLNIPLVEDYEFIRAFKDTLKNEGYESYNDKVGINFSGNEDLDKIRDVLEILGIHKQVWQADGITSCFARGTERLKEALEKRDTPGYNYINKVYAWTLVRKSIMRRSLRLGVDGVMSNNPDRVIKALKEKEFADKFRLATYNDNPWEKFRG</sequence>
<organism>
    <name type="scientific">Sicarius cf. damarensis (strain GJB-2008)</name>
    <name type="common">Six-eyed sand spider</name>
    <dbReference type="NCBI Taxonomy" id="575956"/>
    <lineage>
        <taxon>Eukaryota</taxon>
        <taxon>Metazoa</taxon>
        <taxon>Ecdysozoa</taxon>
        <taxon>Arthropoda</taxon>
        <taxon>Chelicerata</taxon>
        <taxon>Arachnida</taxon>
        <taxon>Araneae</taxon>
        <taxon>Araneomorphae</taxon>
        <taxon>Haplogynae</taxon>
        <taxon>Scytodoidea</taxon>
        <taxon>Sicariidae</taxon>
        <taxon>Sicarius</taxon>
    </lineage>
</organism>
<comment type="function">
    <text evidence="1 3">Dermonecrotic toxins cleave the phosphodiester linkage between the phosphate and headgroup of certain phospholipids (sphingolipid and lysolipid substrates), forming an alcohol (often choline) and a cyclic phosphate (By similarity). This toxin acts on sphingomyelin (SM) (By similarity). It may also act on ceramide phosphoethanolamine (CPE), lysophosphatidylcholine (LPC) and lysophosphatidylethanolamine (LPE), but not on lysophosphatidylserine (LPS), and lysophosphatidylglycerol (LPG) (By similarity). It acts by transphosphatidylation, releasing exclusively cyclic phosphate products as second products (By similarity). Induces dermonecrosis, hemolysis, increased vascular permeability, edema, inflammatory response, and platelet aggregation (By similarity).</text>
</comment>
<comment type="catalytic activity">
    <reaction evidence="1">
        <text>an N-(acyl)-sphingosylphosphocholine = an N-(acyl)-sphingosyl-1,3-cyclic phosphate + choline</text>
        <dbReference type="Rhea" id="RHEA:60652"/>
        <dbReference type="ChEBI" id="CHEBI:15354"/>
        <dbReference type="ChEBI" id="CHEBI:64583"/>
        <dbReference type="ChEBI" id="CHEBI:143892"/>
    </reaction>
</comment>
<comment type="catalytic activity">
    <reaction evidence="1">
        <text>an N-(acyl)-sphingosylphosphoethanolamine = an N-(acyl)-sphingosyl-1,3-cyclic phosphate + ethanolamine</text>
        <dbReference type="Rhea" id="RHEA:60648"/>
        <dbReference type="ChEBI" id="CHEBI:57603"/>
        <dbReference type="ChEBI" id="CHEBI:143891"/>
        <dbReference type="ChEBI" id="CHEBI:143892"/>
    </reaction>
</comment>
<comment type="catalytic activity">
    <reaction evidence="1">
        <text>a 1-acyl-sn-glycero-3-phosphocholine = a 1-acyl-sn-glycero-2,3-cyclic phosphate + choline</text>
        <dbReference type="Rhea" id="RHEA:60700"/>
        <dbReference type="ChEBI" id="CHEBI:15354"/>
        <dbReference type="ChEBI" id="CHEBI:58168"/>
        <dbReference type="ChEBI" id="CHEBI:143947"/>
    </reaction>
</comment>
<comment type="catalytic activity">
    <reaction evidence="1">
        <text>a 1-acyl-sn-glycero-3-phosphoethanolamine = a 1-acyl-sn-glycero-2,3-cyclic phosphate + ethanolamine</text>
        <dbReference type="Rhea" id="RHEA:60704"/>
        <dbReference type="ChEBI" id="CHEBI:57603"/>
        <dbReference type="ChEBI" id="CHEBI:64381"/>
        <dbReference type="ChEBI" id="CHEBI:143947"/>
    </reaction>
</comment>
<comment type="cofactor">
    <cofactor evidence="5">
        <name>Mg(2+)</name>
        <dbReference type="ChEBI" id="CHEBI:18420"/>
    </cofactor>
    <text evidence="5">Binds 1 Mg(2+) ion per subunit.</text>
</comment>
<comment type="subcellular location">
    <subcellularLocation>
        <location evidence="8">Secreted</location>
    </subcellularLocation>
</comment>
<comment type="tissue specificity">
    <text evidence="8">Expressed by the venom gland.</text>
</comment>
<comment type="similarity">
    <text evidence="7">Belongs to the arthropod phospholipase D family. Class II subfamily.</text>
</comment>
<comment type="caution">
    <text evidence="1 2 4">The most common activity assay for dermonecrotic toxins detects enzymatic activity by monitoring choline release from substrate. Liberation of choline from sphingomyelin (SM) or lysophosphatidylcholine (LPC) is commonly assumed to result from substrate hydrolysis, giving either ceramide-1-phosphate (C1P) or lysophosphatidic acid (LPA), respectively, as a second product. However, two studies from Lajoie and colleagues (2013 and 2015) report the observation of exclusive formation of cyclic phosphate products as second products, resulting from intramolecular transphosphatidylation. Cyclic phosphates have vastly different biological properties from their monoester counterparts, and they may be relevant to the pathology of brown spider envenomation.</text>
</comment>
<accession>C0JB75</accession>
<name>B2KB5_SICCD</name>
<feature type="chain" id="PRO_0000392890" description="Dermonecrotic toxin SdSicTox-betaIIB1bv">
    <location>
        <begin position="1" status="less than"/>
        <end position="274"/>
    </location>
</feature>
<feature type="active site" evidence="5">
    <location>
        <position position="5"/>
    </location>
</feature>
<feature type="active site" description="Nucleophile" evidence="5">
    <location>
        <position position="41"/>
    </location>
</feature>
<feature type="binding site" evidence="5">
    <location>
        <position position="25"/>
    </location>
    <ligand>
        <name>Mg(2+)</name>
        <dbReference type="ChEBI" id="CHEBI:18420"/>
    </ligand>
</feature>
<feature type="binding site" evidence="5">
    <location>
        <position position="27"/>
    </location>
    <ligand>
        <name>Mg(2+)</name>
        <dbReference type="ChEBI" id="CHEBI:18420"/>
    </ligand>
</feature>
<feature type="binding site" evidence="5">
    <location>
        <position position="85"/>
    </location>
    <ligand>
        <name>Mg(2+)</name>
        <dbReference type="ChEBI" id="CHEBI:18420"/>
    </ligand>
</feature>
<feature type="disulfide bond" evidence="3">
    <location>
        <begin position="45"/>
        <end position="51"/>
    </location>
</feature>
<feature type="disulfide bond" evidence="3">
    <location>
        <begin position="47"/>
        <end position="190"/>
    </location>
</feature>
<feature type="non-terminal residue">
    <location>
        <position position="1"/>
    </location>
</feature>
<proteinExistence type="evidence at transcript level"/>
<dbReference type="EC" id="4.6.1.-" evidence="4"/>
<dbReference type="EMBL" id="FJ171510">
    <property type="protein sequence ID" value="ACN49006.1"/>
    <property type="molecule type" value="mRNA"/>
</dbReference>
<dbReference type="SMR" id="C0JB75"/>
<dbReference type="GO" id="GO:0005576">
    <property type="term" value="C:extracellular region"/>
    <property type="evidence" value="ECO:0007669"/>
    <property type="project" value="UniProtKB-SubCell"/>
</dbReference>
<dbReference type="GO" id="GO:0016829">
    <property type="term" value="F:lyase activity"/>
    <property type="evidence" value="ECO:0007669"/>
    <property type="project" value="UniProtKB-KW"/>
</dbReference>
<dbReference type="GO" id="GO:0046872">
    <property type="term" value="F:metal ion binding"/>
    <property type="evidence" value="ECO:0007669"/>
    <property type="project" value="UniProtKB-KW"/>
</dbReference>
<dbReference type="GO" id="GO:0008081">
    <property type="term" value="F:phosphoric diester hydrolase activity"/>
    <property type="evidence" value="ECO:0007669"/>
    <property type="project" value="InterPro"/>
</dbReference>
<dbReference type="GO" id="GO:0090729">
    <property type="term" value="F:toxin activity"/>
    <property type="evidence" value="ECO:0007669"/>
    <property type="project" value="UniProtKB-KW"/>
</dbReference>
<dbReference type="GO" id="GO:0031640">
    <property type="term" value="P:killing of cells of another organism"/>
    <property type="evidence" value="ECO:0007669"/>
    <property type="project" value="UniProtKB-KW"/>
</dbReference>
<dbReference type="GO" id="GO:0016042">
    <property type="term" value="P:lipid catabolic process"/>
    <property type="evidence" value="ECO:0007669"/>
    <property type="project" value="UniProtKB-KW"/>
</dbReference>
<dbReference type="CDD" id="cd08576">
    <property type="entry name" value="GDPD_like_SMaseD_PLD"/>
    <property type="match status" value="1"/>
</dbReference>
<dbReference type="Gene3D" id="3.20.20.190">
    <property type="entry name" value="Phosphatidylinositol (PI) phosphodiesterase"/>
    <property type="match status" value="1"/>
</dbReference>
<dbReference type="InterPro" id="IPR017946">
    <property type="entry name" value="PLC-like_Pdiesterase_TIM-brl"/>
</dbReference>
<dbReference type="SUPFAM" id="SSF51695">
    <property type="entry name" value="PLC-like phosphodiesterases"/>
    <property type="match status" value="1"/>
</dbReference>